<sequence>MAQQTQSEIRYLTPPSVDVKKKKYCRFKKSGIRYIDYKDPEFLKKFLNEQGKILPRRITGTSLKFQRRIAQAVKRARHLALLPYVTDMMK</sequence>
<comment type="function">
    <text evidence="1">Binds as a heterodimer with protein bS6 to the central domain of the 16S rRNA, where it helps stabilize the platform of the 30S subunit.</text>
</comment>
<comment type="subunit">
    <text evidence="1">Part of the 30S ribosomal subunit. Forms a tight heterodimer with protein bS6.</text>
</comment>
<comment type="similarity">
    <text evidence="1">Belongs to the bacterial ribosomal protein bS18 family.</text>
</comment>
<organism>
    <name type="scientific">Bacteroides thetaiotaomicron (strain ATCC 29148 / DSM 2079 / JCM 5827 / CCUG 10774 / NCTC 10582 / VPI-5482 / E50)</name>
    <dbReference type="NCBI Taxonomy" id="226186"/>
    <lineage>
        <taxon>Bacteria</taxon>
        <taxon>Pseudomonadati</taxon>
        <taxon>Bacteroidota</taxon>
        <taxon>Bacteroidia</taxon>
        <taxon>Bacteroidales</taxon>
        <taxon>Bacteroidaceae</taxon>
        <taxon>Bacteroides</taxon>
    </lineage>
</organism>
<dbReference type="EMBL" id="AE015928">
    <property type="protein sequence ID" value="AAO77269.1"/>
    <property type="molecule type" value="Genomic_DNA"/>
</dbReference>
<dbReference type="RefSeq" id="NP_811075.1">
    <property type="nucleotide sequence ID" value="NC_004663.1"/>
</dbReference>
<dbReference type="RefSeq" id="WP_008759740.1">
    <property type="nucleotide sequence ID" value="NZ_UYXG01000020.1"/>
</dbReference>
<dbReference type="SMR" id="Q8A5S6"/>
<dbReference type="FunCoup" id="Q8A5S6">
    <property type="interactions" value="580"/>
</dbReference>
<dbReference type="STRING" id="226186.BT_2162"/>
<dbReference type="PaxDb" id="226186-BT_2162"/>
<dbReference type="EnsemblBacteria" id="AAO77269">
    <property type="protein sequence ID" value="AAO77269"/>
    <property type="gene ID" value="BT_2162"/>
</dbReference>
<dbReference type="GeneID" id="69587183"/>
<dbReference type="KEGG" id="bth:BT_2162"/>
<dbReference type="PATRIC" id="fig|226186.12.peg.2226"/>
<dbReference type="eggNOG" id="COG0238">
    <property type="taxonomic scope" value="Bacteria"/>
</dbReference>
<dbReference type="HOGENOM" id="CLU_148710_2_0_10"/>
<dbReference type="InParanoid" id="Q8A5S6"/>
<dbReference type="OrthoDB" id="9812008at2"/>
<dbReference type="Proteomes" id="UP000001414">
    <property type="component" value="Chromosome"/>
</dbReference>
<dbReference type="GO" id="GO:0022627">
    <property type="term" value="C:cytosolic small ribosomal subunit"/>
    <property type="evidence" value="ECO:0000318"/>
    <property type="project" value="GO_Central"/>
</dbReference>
<dbReference type="GO" id="GO:0070181">
    <property type="term" value="F:small ribosomal subunit rRNA binding"/>
    <property type="evidence" value="ECO:0000318"/>
    <property type="project" value="GO_Central"/>
</dbReference>
<dbReference type="GO" id="GO:0003735">
    <property type="term" value="F:structural constituent of ribosome"/>
    <property type="evidence" value="ECO:0000318"/>
    <property type="project" value="GO_Central"/>
</dbReference>
<dbReference type="GO" id="GO:0006412">
    <property type="term" value="P:translation"/>
    <property type="evidence" value="ECO:0000318"/>
    <property type="project" value="GO_Central"/>
</dbReference>
<dbReference type="FunFam" id="4.10.640.10:FF:000004">
    <property type="entry name" value="30S ribosomal protein S18"/>
    <property type="match status" value="1"/>
</dbReference>
<dbReference type="Gene3D" id="4.10.640.10">
    <property type="entry name" value="Ribosomal protein S18"/>
    <property type="match status" value="1"/>
</dbReference>
<dbReference type="HAMAP" id="MF_00270">
    <property type="entry name" value="Ribosomal_bS18"/>
    <property type="match status" value="1"/>
</dbReference>
<dbReference type="InterPro" id="IPR001648">
    <property type="entry name" value="Ribosomal_bS18"/>
</dbReference>
<dbReference type="InterPro" id="IPR018275">
    <property type="entry name" value="Ribosomal_bS18_CS"/>
</dbReference>
<dbReference type="InterPro" id="IPR036870">
    <property type="entry name" value="Ribosomal_bS18_sf"/>
</dbReference>
<dbReference type="NCBIfam" id="TIGR00165">
    <property type="entry name" value="S18"/>
    <property type="match status" value="1"/>
</dbReference>
<dbReference type="PANTHER" id="PTHR13479">
    <property type="entry name" value="30S RIBOSOMAL PROTEIN S18"/>
    <property type="match status" value="1"/>
</dbReference>
<dbReference type="PANTHER" id="PTHR13479:SF40">
    <property type="entry name" value="SMALL RIBOSOMAL SUBUNIT PROTEIN BS18M"/>
    <property type="match status" value="1"/>
</dbReference>
<dbReference type="Pfam" id="PF01084">
    <property type="entry name" value="Ribosomal_S18"/>
    <property type="match status" value="1"/>
</dbReference>
<dbReference type="PRINTS" id="PR00974">
    <property type="entry name" value="RIBOSOMALS18"/>
</dbReference>
<dbReference type="SUPFAM" id="SSF46911">
    <property type="entry name" value="Ribosomal protein S18"/>
    <property type="match status" value="1"/>
</dbReference>
<dbReference type="PROSITE" id="PS00057">
    <property type="entry name" value="RIBOSOMAL_S18"/>
    <property type="match status" value="1"/>
</dbReference>
<name>RS18_BACTN</name>
<feature type="chain" id="PRO_0000111118" description="Small ribosomal subunit protein bS18">
    <location>
        <begin position="1"/>
        <end position="90"/>
    </location>
</feature>
<gene>
    <name evidence="1" type="primary">rpsR</name>
    <name type="ordered locus">BT_2162</name>
</gene>
<reference key="1">
    <citation type="journal article" date="2003" name="Science">
        <title>A genomic view of the human-Bacteroides thetaiotaomicron symbiosis.</title>
        <authorList>
            <person name="Xu J."/>
            <person name="Bjursell M.K."/>
            <person name="Himrod J."/>
            <person name="Deng S."/>
            <person name="Carmichael L.K."/>
            <person name="Chiang H.C."/>
            <person name="Hooper L.V."/>
            <person name="Gordon J.I."/>
        </authorList>
    </citation>
    <scope>NUCLEOTIDE SEQUENCE [LARGE SCALE GENOMIC DNA]</scope>
    <source>
        <strain>ATCC 29148 / DSM 2079 / JCM 5827 / CCUG 10774 / NCTC 10582 / VPI-5482 / E50</strain>
    </source>
</reference>
<evidence type="ECO:0000255" key="1">
    <source>
        <dbReference type="HAMAP-Rule" id="MF_00270"/>
    </source>
</evidence>
<evidence type="ECO:0000305" key="2"/>
<proteinExistence type="inferred from homology"/>
<keyword id="KW-1185">Reference proteome</keyword>
<keyword id="KW-0687">Ribonucleoprotein</keyword>
<keyword id="KW-0689">Ribosomal protein</keyword>
<keyword id="KW-0694">RNA-binding</keyword>
<keyword id="KW-0699">rRNA-binding</keyword>
<protein>
    <recommendedName>
        <fullName evidence="1">Small ribosomal subunit protein bS18</fullName>
    </recommendedName>
    <alternativeName>
        <fullName evidence="2">30S ribosomal protein S18</fullName>
    </alternativeName>
</protein>
<accession>Q8A5S6</accession>